<accession>Q0P565</accession>
<feature type="initiator methionine" description="Removed" evidence="2">
    <location>
        <position position="1"/>
    </location>
</feature>
<feature type="chain" id="PRO_0000311388" description="5'-deoxynucleotidase HDDC2">
    <location>
        <begin position="2"/>
        <end position="205"/>
    </location>
</feature>
<feature type="domain" description="HD" evidence="3">
    <location>
        <begin position="47"/>
        <end position="149"/>
    </location>
</feature>
<feature type="binding site" evidence="2">
    <location>
        <position position="50"/>
    </location>
    <ligand>
        <name>a divalent metal cation</name>
        <dbReference type="ChEBI" id="CHEBI:60240"/>
        <label>1</label>
    </ligand>
</feature>
<feature type="binding site" evidence="2">
    <location>
        <position position="78"/>
    </location>
    <ligand>
        <name>a divalent metal cation</name>
        <dbReference type="ChEBI" id="CHEBI:60240"/>
        <label>1</label>
    </ligand>
</feature>
<feature type="binding site" evidence="2">
    <location>
        <position position="79"/>
    </location>
    <ligand>
        <name>a divalent metal cation</name>
        <dbReference type="ChEBI" id="CHEBI:60240"/>
        <label>1</label>
    </ligand>
</feature>
<feature type="binding site" evidence="2">
    <location>
        <position position="82"/>
    </location>
    <ligand>
        <name>a divalent metal cation</name>
        <dbReference type="ChEBI" id="CHEBI:60240"/>
        <label>2</label>
    </ligand>
</feature>
<feature type="binding site" evidence="2">
    <location>
        <position position="87"/>
    </location>
    <ligand>
        <name>a divalent metal cation</name>
        <dbReference type="ChEBI" id="CHEBI:60240"/>
        <label>2</label>
    </ligand>
</feature>
<feature type="binding site" evidence="2">
    <location>
        <position position="88"/>
    </location>
    <ligand>
        <name>a divalent metal cation</name>
        <dbReference type="ChEBI" id="CHEBI:60240"/>
        <label>2</label>
    </ligand>
</feature>
<feature type="binding site" evidence="2">
    <location>
        <position position="144"/>
    </location>
    <ligand>
        <name>a divalent metal cation</name>
        <dbReference type="ChEBI" id="CHEBI:60240"/>
        <label>1</label>
    </ligand>
</feature>
<feature type="modified residue" description="N-acetylalanine" evidence="2">
    <location>
        <position position="2"/>
    </location>
</feature>
<feature type="modified residue" description="Phosphoserine" evidence="2">
    <location>
        <position position="3"/>
    </location>
</feature>
<feature type="modified residue" description="Phosphoserine" evidence="2">
    <location>
        <position position="5"/>
    </location>
</feature>
<feature type="modified residue" description="Phosphoserine" evidence="2">
    <location>
        <position position="205"/>
    </location>
</feature>
<protein>
    <recommendedName>
        <fullName evidence="4">5'-deoxynucleotidase HDDC2</fullName>
        <ecNumber evidence="1">3.1.3.89</ecNumber>
    </recommendedName>
    <alternativeName>
        <fullName>HD domain-containing protein 2</fullName>
    </alternativeName>
</protein>
<name>HDDC2_BOVIN</name>
<keyword id="KW-0007">Acetylation</keyword>
<keyword id="KW-0170">Cobalt</keyword>
<keyword id="KW-0378">Hydrolase</keyword>
<keyword id="KW-0460">Magnesium</keyword>
<keyword id="KW-0464">Manganese</keyword>
<keyword id="KW-0479">Metal-binding</keyword>
<keyword id="KW-0597">Phosphoprotein</keyword>
<keyword id="KW-1185">Reference proteome</keyword>
<dbReference type="EC" id="3.1.3.89" evidence="1"/>
<dbReference type="EMBL" id="BC120449">
    <property type="protein sequence ID" value="AAI20450.1"/>
    <property type="molecule type" value="mRNA"/>
</dbReference>
<dbReference type="RefSeq" id="NP_001068869.1">
    <property type="nucleotide sequence ID" value="NM_001075401.1"/>
</dbReference>
<dbReference type="SMR" id="Q0P565"/>
<dbReference type="FunCoup" id="Q0P565">
    <property type="interactions" value="1280"/>
</dbReference>
<dbReference type="STRING" id="9913.ENSBTAP00000004334"/>
<dbReference type="PaxDb" id="9913-ENSBTAP00000004334"/>
<dbReference type="GeneID" id="509282"/>
<dbReference type="KEGG" id="bta:509282"/>
<dbReference type="CTD" id="51020"/>
<dbReference type="VEuPathDB" id="HostDB:ENSBTAG00000003340"/>
<dbReference type="eggNOG" id="KOG3197">
    <property type="taxonomic scope" value="Eukaryota"/>
</dbReference>
<dbReference type="HOGENOM" id="CLU_039453_2_2_1"/>
<dbReference type="InParanoid" id="Q0P565"/>
<dbReference type="OMA" id="TWRLCLM"/>
<dbReference type="OrthoDB" id="10254258at2759"/>
<dbReference type="TreeFam" id="TF313855"/>
<dbReference type="Proteomes" id="UP000009136">
    <property type="component" value="Chromosome 9"/>
</dbReference>
<dbReference type="Bgee" id="ENSBTAG00000003340">
    <property type="expression patterns" value="Expressed in caput epididymis and 104 other cell types or tissues"/>
</dbReference>
<dbReference type="GO" id="GO:0002953">
    <property type="term" value="F:5'-deoxynucleotidase activity"/>
    <property type="evidence" value="ECO:0000318"/>
    <property type="project" value="GO_Central"/>
</dbReference>
<dbReference type="GO" id="GO:0046872">
    <property type="term" value="F:metal ion binding"/>
    <property type="evidence" value="ECO:0007669"/>
    <property type="project" value="UniProtKB-KW"/>
</dbReference>
<dbReference type="FunFam" id="1.10.3210.10:FF:000011">
    <property type="entry name" value="HD domain-containing protein 2"/>
    <property type="match status" value="1"/>
</dbReference>
<dbReference type="Gene3D" id="1.10.3210.10">
    <property type="entry name" value="Hypothetical protein af1432"/>
    <property type="match status" value="1"/>
</dbReference>
<dbReference type="InterPro" id="IPR003607">
    <property type="entry name" value="HD/PDEase_dom"/>
</dbReference>
<dbReference type="InterPro" id="IPR006674">
    <property type="entry name" value="HD_domain"/>
</dbReference>
<dbReference type="InterPro" id="IPR039356">
    <property type="entry name" value="YfbR/HDDC2"/>
</dbReference>
<dbReference type="PANTHER" id="PTHR11845">
    <property type="entry name" value="5'-DEOXYNUCLEOTIDASE HDDC2"/>
    <property type="match status" value="1"/>
</dbReference>
<dbReference type="PANTHER" id="PTHR11845:SF13">
    <property type="entry name" value="5'-DEOXYNUCLEOTIDASE HDDC2"/>
    <property type="match status" value="1"/>
</dbReference>
<dbReference type="Pfam" id="PF13023">
    <property type="entry name" value="HD_3"/>
    <property type="match status" value="1"/>
</dbReference>
<dbReference type="SMART" id="SM00471">
    <property type="entry name" value="HDc"/>
    <property type="match status" value="1"/>
</dbReference>
<dbReference type="SUPFAM" id="SSF109604">
    <property type="entry name" value="HD-domain/PDEase-like"/>
    <property type="match status" value="1"/>
</dbReference>
<dbReference type="PROSITE" id="PS51831">
    <property type="entry name" value="HD"/>
    <property type="match status" value="1"/>
</dbReference>
<evidence type="ECO:0000250" key="1">
    <source>
        <dbReference type="UniProtKB" id="P53144"/>
    </source>
</evidence>
<evidence type="ECO:0000250" key="2">
    <source>
        <dbReference type="UniProtKB" id="Q7Z4H3"/>
    </source>
</evidence>
<evidence type="ECO:0000255" key="3">
    <source>
        <dbReference type="PROSITE-ProRule" id="PRU01175"/>
    </source>
</evidence>
<evidence type="ECO:0000305" key="4"/>
<sequence>MASASPVATMSGRGARNLLQFLRLVGQLKRVPRTGWVYRNVQKPESVSDHMYRMAVMALVTKDEHLNKDRCVRLALVHDMAECIVGDIAPADNVPREEKHRREEEAMKQLTQLLPEDLQKELYELWEEYETQSSAEAKFVKQLDQCEMILQASEYEDLENKPGRLQDFYDSTAGKFSHPEIVQLVSELEAERNANIAGAASEPCS</sequence>
<gene>
    <name type="primary">HDDC2</name>
</gene>
<comment type="function">
    <text evidence="1">Catalyzes the dephosphorylation of the nucleoside 5'-monophosphates deoxyadenosine monophosphate (dAMP), deoxycytidine monophosphate (dCMP), deoxyguanosine monophosphate (dGMP) and deoxythymidine monophosphate (dTMP).</text>
</comment>
<comment type="catalytic activity">
    <reaction evidence="1">
        <text>a 2'-deoxyribonucleoside 5'-phosphate + H2O = a 2'-deoxyribonucleoside + phosphate</text>
        <dbReference type="Rhea" id="RHEA:36167"/>
        <dbReference type="ChEBI" id="CHEBI:15377"/>
        <dbReference type="ChEBI" id="CHEBI:18274"/>
        <dbReference type="ChEBI" id="CHEBI:43474"/>
        <dbReference type="ChEBI" id="CHEBI:65317"/>
        <dbReference type="EC" id="3.1.3.89"/>
    </reaction>
</comment>
<comment type="cofactor">
    <cofactor evidence="1">
        <name>Mn(2+)</name>
        <dbReference type="ChEBI" id="CHEBI:29035"/>
    </cofactor>
    <cofactor evidence="1">
        <name>Co(2+)</name>
        <dbReference type="ChEBI" id="CHEBI:48828"/>
    </cofactor>
    <cofactor evidence="1">
        <name>Mg(2+)</name>
        <dbReference type="ChEBI" id="CHEBI:18420"/>
    </cofactor>
    <text evidence="1 2">Binds 2 divalent metal cations (By similarity). Shows activity with Mn(2+), Co(2+) and Mg(2+) but shows no activity with Zn(2+) (By similarity).</text>
</comment>
<comment type="subunit">
    <text evidence="1">Homodimer.</text>
</comment>
<comment type="similarity">
    <text evidence="4">Belongs to the HDDC2 family.</text>
</comment>
<reference key="1">
    <citation type="submission" date="2006-08" db="EMBL/GenBank/DDBJ databases">
        <authorList>
            <consortium name="NIH - Mammalian Gene Collection (MGC) project"/>
        </authorList>
    </citation>
    <scope>NUCLEOTIDE SEQUENCE [LARGE SCALE MRNA]</scope>
    <source>
        <strain>Hereford</strain>
        <tissue>Fetal skin</tissue>
    </source>
</reference>
<proteinExistence type="evidence at transcript level"/>
<organism>
    <name type="scientific">Bos taurus</name>
    <name type="common">Bovine</name>
    <dbReference type="NCBI Taxonomy" id="9913"/>
    <lineage>
        <taxon>Eukaryota</taxon>
        <taxon>Metazoa</taxon>
        <taxon>Chordata</taxon>
        <taxon>Craniata</taxon>
        <taxon>Vertebrata</taxon>
        <taxon>Euteleostomi</taxon>
        <taxon>Mammalia</taxon>
        <taxon>Eutheria</taxon>
        <taxon>Laurasiatheria</taxon>
        <taxon>Artiodactyla</taxon>
        <taxon>Ruminantia</taxon>
        <taxon>Pecora</taxon>
        <taxon>Bovidae</taxon>
        <taxon>Bovinae</taxon>
        <taxon>Bos</taxon>
    </lineage>
</organism>